<sequence>MQAEDLKLILASTSPRRRELLGRFGLPFEVLGVEVEEVPRCGEAAEDYVRRVASDKSARGQSMAPSDAAVLAADTEVVLDGQIFGKPQGAEHAREMLGRLSGRTHEVLSAVSLRRGDCHWQALSVSRVRFRDLGLEEIDAYWASGEPADKAGAYAIQGRGELFVAELQGSFSGVMGLPLLETARLLRHLGLGTARLLAGAAP</sequence>
<gene>
    <name type="ordered locus">MCA0378</name>
</gene>
<keyword id="KW-0963">Cytoplasm</keyword>
<keyword id="KW-0378">Hydrolase</keyword>
<keyword id="KW-0546">Nucleotide metabolism</keyword>
<keyword id="KW-1185">Reference proteome</keyword>
<organism>
    <name type="scientific">Methylococcus capsulatus (strain ATCC 33009 / NCIMB 11132 / Bath)</name>
    <dbReference type="NCBI Taxonomy" id="243233"/>
    <lineage>
        <taxon>Bacteria</taxon>
        <taxon>Pseudomonadati</taxon>
        <taxon>Pseudomonadota</taxon>
        <taxon>Gammaproteobacteria</taxon>
        <taxon>Methylococcales</taxon>
        <taxon>Methylococcaceae</taxon>
        <taxon>Methylococcus</taxon>
    </lineage>
</organism>
<comment type="function">
    <text evidence="1">Nucleoside triphosphate pyrophosphatase that hydrolyzes dTTP and UTP. May have a dual role in cell division arrest and in preventing the incorporation of modified nucleotides into cellular nucleic acids.</text>
</comment>
<comment type="catalytic activity">
    <reaction evidence="1">
        <text>dTTP + H2O = dTMP + diphosphate + H(+)</text>
        <dbReference type="Rhea" id="RHEA:28534"/>
        <dbReference type="ChEBI" id="CHEBI:15377"/>
        <dbReference type="ChEBI" id="CHEBI:15378"/>
        <dbReference type="ChEBI" id="CHEBI:33019"/>
        <dbReference type="ChEBI" id="CHEBI:37568"/>
        <dbReference type="ChEBI" id="CHEBI:63528"/>
        <dbReference type="EC" id="3.6.1.9"/>
    </reaction>
</comment>
<comment type="catalytic activity">
    <reaction evidence="1">
        <text>UTP + H2O = UMP + diphosphate + H(+)</text>
        <dbReference type="Rhea" id="RHEA:29395"/>
        <dbReference type="ChEBI" id="CHEBI:15377"/>
        <dbReference type="ChEBI" id="CHEBI:15378"/>
        <dbReference type="ChEBI" id="CHEBI:33019"/>
        <dbReference type="ChEBI" id="CHEBI:46398"/>
        <dbReference type="ChEBI" id="CHEBI:57865"/>
        <dbReference type="EC" id="3.6.1.9"/>
    </reaction>
</comment>
<comment type="cofactor">
    <cofactor evidence="1">
        <name>a divalent metal cation</name>
        <dbReference type="ChEBI" id="CHEBI:60240"/>
    </cofactor>
</comment>
<comment type="subcellular location">
    <subcellularLocation>
        <location evidence="1">Cytoplasm</location>
    </subcellularLocation>
</comment>
<comment type="similarity">
    <text evidence="1">Belongs to the Maf family. YhdE subfamily.</text>
</comment>
<accession>Q60BT7</accession>
<protein>
    <recommendedName>
        <fullName evidence="1">dTTP/UTP pyrophosphatase</fullName>
        <shortName evidence="1">dTTPase/UTPase</shortName>
        <ecNumber evidence="1">3.6.1.9</ecNumber>
    </recommendedName>
    <alternativeName>
        <fullName evidence="1">Nucleoside triphosphate pyrophosphatase</fullName>
    </alternativeName>
    <alternativeName>
        <fullName evidence="1">Nucleotide pyrophosphatase</fullName>
        <shortName evidence="1">Nucleotide PPase</shortName>
    </alternativeName>
</protein>
<name>NTPPA_METCA</name>
<evidence type="ECO:0000255" key="1">
    <source>
        <dbReference type="HAMAP-Rule" id="MF_00528"/>
    </source>
</evidence>
<proteinExistence type="inferred from homology"/>
<feature type="chain" id="PRO_0000267341" description="dTTP/UTP pyrophosphatase">
    <location>
        <begin position="1"/>
        <end position="202"/>
    </location>
</feature>
<feature type="active site" description="Proton acceptor" evidence="1">
    <location>
        <position position="74"/>
    </location>
</feature>
<feature type="site" description="Important for substrate specificity" evidence="1">
    <location>
        <position position="16"/>
    </location>
</feature>
<feature type="site" description="Important for substrate specificity" evidence="1">
    <location>
        <position position="75"/>
    </location>
</feature>
<feature type="site" description="Important for substrate specificity" evidence="1">
    <location>
        <position position="157"/>
    </location>
</feature>
<reference key="1">
    <citation type="journal article" date="2004" name="PLoS Biol.">
        <title>Genomic insights into methanotrophy: the complete genome sequence of Methylococcus capsulatus (Bath).</title>
        <authorList>
            <person name="Ward N.L."/>
            <person name="Larsen O."/>
            <person name="Sakwa J."/>
            <person name="Bruseth L."/>
            <person name="Khouri H.M."/>
            <person name="Durkin A.S."/>
            <person name="Dimitrov G."/>
            <person name="Jiang L."/>
            <person name="Scanlan D."/>
            <person name="Kang K.H."/>
            <person name="Lewis M.R."/>
            <person name="Nelson K.E."/>
            <person name="Methe B.A."/>
            <person name="Wu M."/>
            <person name="Heidelberg J.F."/>
            <person name="Paulsen I.T."/>
            <person name="Fouts D.E."/>
            <person name="Ravel J."/>
            <person name="Tettelin H."/>
            <person name="Ren Q."/>
            <person name="Read T.D."/>
            <person name="DeBoy R.T."/>
            <person name="Seshadri R."/>
            <person name="Salzberg S.L."/>
            <person name="Jensen H.B."/>
            <person name="Birkeland N.K."/>
            <person name="Nelson W.C."/>
            <person name="Dodson R.J."/>
            <person name="Grindhaug S.H."/>
            <person name="Holt I.E."/>
            <person name="Eidhammer I."/>
            <person name="Jonasen I."/>
            <person name="Vanaken S."/>
            <person name="Utterback T.R."/>
            <person name="Feldblyum T.V."/>
            <person name="Fraser C.M."/>
            <person name="Lillehaug J.R."/>
            <person name="Eisen J.A."/>
        </authorList>
    </citation>
    <scope>NUCLEOTIDE SEQUENCE [LARGE SCALE GENOMIC DNA]</scope>
    <source>
        <strain>ATCC 33009 / NCIMB 11132 / Bath</strain>
    </source>
</reference>
<dbReference type="EC" id="3.6.1.9" evidence="1"/>
<dbReference type="EMBL" id="AE017282">
    <property type="protein sequence ID" value="AAU90502.1"/>
    <property type="molecule type" value="Genomic_DNA"/>
</dbReference>
<dbReference type="RefSeq" id="WP_010959738.1">
    <property type="nucleotide sequence ID" value="NC_002977.6"/>
</dbReference>
<dbReference type="SMR" id="Q60BT7"/>
<dbReference type="STRING" id="243233.MCA0378"/>
<dbReference type="GeneID" id="88222720"/>
<dbReference type="KEGG" id="mca:MCA0378"/>
<dbReference type="eggNOG" id="COG0424">
    <property type="taxonomic scope" value="Bacteria"/>
</dbReference>
<dbReference type="HOGENOM" id="CLU_040416_2_1_6"/>
<dbReference type="Proteomes" id="UP000006821">
    <property type="component" value="Chromosome"/>
</dbReference>
<dbReference type="GO" id="GO:0005737">
    <property type="term" value="C:cytoplasm"/>
    <property type="evidence" value="ECO:0007669"/>
    <property type="project" value="UniProtKB-SubCell"/>
</dbReference>
<dbReference type="GO" id="GO:0036218">
    <property type="term" value="F:dTTP diphosphatase activity"/>
    <property type="evidence" value="ECO:0007669"/>
    <property type="project" value="RHEA"/>
</dbReference>
<dbReference type="GO" id="GO:0036221">
    <property type="term" value="F:UTP diphosphatase activity"/>
    <property type="evidence" value="ECO:0007669"/>
    <property type="project" value="RHEA"/>
</dbReference>
<dbReference type="GO" id="GO:0009117">
    <property type="term" value="P:nucleotide metabolic process"/>
    <property type="evidence" value="ECO:0007669"/>
    <property type="project" value="UniProtKB-KW"/>
</dbReference>
<dbReference type="CDD" id="cd00555">
    <property type="entry name" value="Maf"/>
    <property type="match status" value="1"/>
</dbReference>
<dbReference type="Gene3D" id="3.90.950.10">
    <property type="match status" value="1"/>
</dbReference>
<dbReference type="HAMAP" id="MF_00528">
    <property type="entry name" value="Maf"/>
    <property type="match status" value="1"/>
</dbReference>
<dbReference type="InterPro" id="IPR029001">
    <property type="entry name" value="ITPase-like_fam"/>
</dbReference>
<dbReference type="InterPro" id="IPR003697">
    <property type="entry name" value="Maf-like"/>
</dbReference>
<dbReference type="NCBIfam" id="TIGR00172">
    <property type="entry name" value="maf"/>
    <property type="match status" value="1"/>
</dbReference>
<dbReference type="PANTHER" id="PTHR43213">
    <property type="entry name" value="BIFUNCTIONAL DTTP/UTP PYROPHOSPHATASE/METHYLTRANSFERASE PROTEIN-RELATED"/>
    <property type="match status" value="1"/>
</dbReference>
<dbReference type="PANTHER" id="PTHR43213:SF5">
    <property type="entry name" value="BIFUNCTIONAL DTTP_UTP PYROPHOSPHATASE_METHYLTRANSFERASE PROTEIN-RELATED"/>
    <property type="match status" value="1"/>
</dbReference>
<dbReference type="Pfam" id="PF02545">
    <property type="entry name" value="Maf"/>
    <property type="match status" value="1"/>
</dbReference>
<dbReference type="PIRSF" id="PIRSF006305">
    <property type="entry name" value="Maf"/>
    <property type="match status" value="1"/>
</dbReference>
<dbReference type="SUPFAM" id="SSF52972">
    <property type="entry name" value="ITPase-like"/>
    <property type="match status" value="1"/>
</dbReference>